<geneLocation type="chloroplast"/>
<evidence type="ECO:0000250" key="1">
    <source>
        <dbReference type="UniProtKB" id="P56761"/>
    </source>
</evidence>
<evidence type="ECO:0000255" key="2">
    <source>
        <dbReference type="HAMAP-Rule" id="MF_01383"/>
    </source>
</evidence>
<name>PSBD_PHAAO</name>
<reference key="1">
    <citation type="journal article" date="2006" name="Mol. Biol. Evol.">
        <title>The chloroplast genome of Phalaenopsis aphrodite (Orchidaceae): comparative analysis of evolutionary rate with that of grasses and its phylogenetic implications.</title>
        <authorList>
            <person name="Chang C.-C."/>
            <person name="Lin H.-C."/>
            <person name="Lin I.-P."/>
            <person name="Chow T.-Y."/>
            <person name="Chen H.-H."/>
            <person name="Chen W.-H."/>
            <person name="Cheng C.-H."/>
            <person name="Lin C.-Y."/>
            <person name="Liu S.-M."/>
            <person name="Chang C.-C."/>
            <person name="Chaw S.-M."/>
        </authorList>
    </citation>
    <scope>NUCLEOTIDE SEQUENCE [LARGE SCALE GENOMIC DNA]</scope>
    <source>
        <strain>cv. Taisugar TS-97</strain>
    </source>
</reference>
<comment type="function">
    <text evidence="2">Photosystem II (PSII) is a light-driven water:plastoquinone oxidoreductase that uses light energy to abstract electrons from H(2)O, generating O(2) and a proton gradient subsequently used for ATP formation. It consists of a core antenna complex that captures photons, and an electron transfer chain that converts photonic excitation into a charge separation. The D1/D2 (PsbA/PsbD) reaction center heterodimer binds P680, the primary electron donor of PSII as well as several subsequent electron acceptors. D2 is needed for assembly of a stable PSII complex.</text>
</comment>
<comment type="catalytic activity">
    <reaction evidence="2">
        <text>2 a plastoquinone + 4 hnu + 2 H2O = 2 a plastoquinol + O2</text>
        <dbReference type="Rhea" id="RHEA:36359"/>
        <dbReference type="Rhea" id="RHEA-COMP:9561"/>
        <dbReference type="Rhea" id="RHEA-COMP:9562"/>
        <dbReference type="ChEBI" id="CHEBI:15377"/>
        <dbReference type="ChEBI" id="CHEBI:15379"/>
        <dbReference type="ChEBI" id="CHEBI:17757"/>
        <dbReference type="ChEBI" id="CHEBI:30212"/>
        <dbReference type="ChEBI" id="CHEBI:62192"/>
        <dbReference type="EC" id="1.10.3.9"/>
    </reaction>
</comment>
<comment type="cofactor">
    <text evidence="2">The D1/D2 heterodimer binds P680, chlorophylls that are the primary electron donor of PSII, and subsequent electron acceptors. It shares a non-heme iron and each subunit binds pheophytin, quinone, additional chlorophylls, carotenoids and lipids. There is also a Cl(-1) ion associated with D1 and D2, which is required for oxygen evolution. The PSII complex binds additional chlorophylls, carotenoids and specific lipids.</text>
</comment>
<comment type="subunit">
    <text evidence="2">PSII is composed of 1 copy each of membrane proteins PsbA, PsbB, PsbC, PsbD, PsbE, PsbF, PsbH, PsbI, PsbJ, PsbK, PsbL, PsbM, PsbT, PsbX, PsbY, PsbZ, Psb30/Ycf12, at least 3 peripheral proteins of the oxygen-evolving complex and a large number of cofactors. It forms dimeric complexes.</text>
</comment>
<comment type="subcellular location">
    <subcellularLocation>
        <location evidence="2">Plastid</location>
        <location evidence="2">Chloroplast thylakoid membrane</location>
        <topology evidence="2">Multi-pass membrane protein</topology>
    </subcellularLocation>
</comment>
<comment type="miscellaneous">
    <text evidence="2">2 of the reaction center chlorophylls (ChlD1 and ChlD2) are entirely coordinated by water.</text>
</comment>
<comment type="similarity">
    <text evidence="2">Belongs to the reaction center PufL/M/PsbA/D family.</text>
</comment>
<dbReference type="EC" id="1.10.3.9" evidence="2"/>
<dbReference type="EMBL" id="AY916449">
    <property type="protein sequence ID" value="AAW82498.1"/>
    <property type="molecule type" value="Genomic_DNA"/>
</dbReference>
<dbReference type="RefSeq" id="YP_358573.1">
    <property type="nucleotide sequence ID" value="NC_007499.1"/>
</dbReference>
<dbReference type="SMR" id="Q3BAP5"/>
<dbReference type="GeneID" id="3741653"/>
<dbReference type="GO" id="GO:0009535">
    <property type="term" value="C:chloroplast thylakoid membrane"/>
    <property type="evidence" value="ECO:0007669"/>
    <property type="project" value="UniProtKB-SubCell"/>
</dbReference>
<dbReference type="GO" id="GO:0009523">
    <property type="term" value="C:photosystem II"/>
    <property type="evidence" value="ECO:0007669"/>
    <property type="project" value="UniProtKB-KW"/>
</dbReference>
<dbReference type="GO" id="GO:0016168">
    <property type="term" value="F:chlorophyll binding"/>
    <property type="evidence" value="ECO:0007669"/>
    <property type="project" value="UniProtKB-UniRule"/>
</dbReference>
<dbReference type="GO" id="GO:0045156">
    <property type="term" value="F:electron transporter, transferring electrons within the cyclic electron transport pathway of photosynthesis activity"/>
    <property type="evidence" value="ECO:0007669"/>
    <property type="project" value="InterPro"/>
</dbReference>
<dbReference type="GO" id="GO:0005506">
    <property type="term" value="F:iron ion binding"/>
    <property type="evidence" value="ECO:0007669"/>
    <property type="project" value="UniProtKB-UniRule"/>
</dbReference>
<dbReference type="GO" id="GO:0010242">
    <property type="term" value="F:oxygen evolving activity"/>
    <property type="evidence" value="ECO:0007669"/>
    <property type="project" value="UniProtKB-EC"/>
</dbReference>
<dbReference type="GO" id="GO:0009772">
    <property type="term" value="P:photosynthetic electron transport in photosystem II"/>
    <property type="evidence" value="ECO:0007669"/>
    <property type="project" value="InterPro"/>
</dbReference>
<dbReference type="CDD" id="cd09288">
    <property type="entry name" value="Photosystem-II_D2"/>
    <property type="match status" value="1"/>
</dbReference>
<dbReference type="FunFam" id="1.20.85.10:FF:000001">
    <property type="entry name" value="photosystem II D2 protein-like"/>
    <property type="match status" value="1"/>
</dbReference>
<dbReference type="Gene3D" id="1.20.85.10">
    <property type="entry name" value="Photosystem II protein D1-like"/>
    <property type="match status" value="1"/>
</dbReference>
<dbReference type="HAMAP" id="MF_01383">
    <property type="entry name" value="PSII_PsbD_D2"/>
    <property type="match status" value="1"/>
</dbReference>
<dbReference type="InterPro" id="IPR055266">
    <property type="entry name" value="D1/D2"/>
</dbReference>
<dbReference type="InterPro" id="IPR036854">
    <property type="entry name" value="Photo_II_D1/D2_sf"/>
</dbReference>
<dbReference type="InterPro" id="IPR000484">
    <property type="entry name" value="Photo_RC_L/M"/>
</dbReference>
<dbReference type="InterPro" id="IPR055265">
    <property type="entry name" value="Photo_RC_L/M_CS"/>
</dbReference>
<dbReference type="InterPro" id="IPR005868">
    <property type="entry name" value="PSII_PsbD/D2"/>
</dbReference>
<dbReference type="NCBIfam" id="TIGR01152">
    <property type="entry name" value="psbD"/>
    <property type="match status" value="1"/>
</dbReference>
<dbReference type="PANTHER" id="PTHR33149:SF12">
    <property type="entry name" value="PHOTOSYSTEM II D2 PROTEIN"/>
    <property type="match status" value="1"/>
</dbReference>
<dbReference type="PANTHER" id="PTHR33149">
    <property type="entry name" value="PHOTOSYSTEM II PROTEIN D1"/>
    <property type="match status" value="1"/>
</dbReference>
<dbReference type="Pfam" id="PF00124">
    <property type="entry name" value="Photo_RC"/>
    <property type="match status" value="1"/>
</dbReference>
<dbReference type="PRINTS" id="PR00256">
    <property type="entry name" value="REACTNCENTRE"/>
</dbReference>
<dbReference type="SUPFAM" id="SSF81483">
    <property type="entry name" value="Bacterial photosystem II reaction centre, L and M subunits"/>
    <property type="match status" value="1"/>
</dbReference>
<dbReference type="PROSITE" id="PS00244">
    <property type="entry name" value="REACTION_CENTER"/>
    <property type="match status" value="1"/>
</dbReference>
<accession>Q3BAP5</accession>
<feature type="initiator methionine" description="Removed" evidence="1">
    <location>
        <position position="1"/>
    </location>
</feature>
<feature type="chain" id="PRO_0000359684" description="Photosystem II D2 protein">
    <location>
        <begin position="2"/>
        <end position="353"/>
    </location>
</feature>
<feature type="transmembrane region" description="Helical" evidence="2">
    <location>
        <begin position="41"/>
        <end position="61"/>
    </location>
</feature>
<feature type="transmembrane region" description="Helical" evidence="2">
    <location>
        <begin position="125"/>
        <end position="141"/>
    </location>
</feature>
<feature type="transmembrane region" description="Helical" evidence="2">
    <location>
        <begin position="153"/>
        <end position="166"/>
    </location>
</feature>
<feature type="transmembrane region" description="Helical" evidence="2">
    <location>
        <begin position="208"/>
        <end position="228"/>
    </location>
</feature>
<feature type="transmembrane region" description="Helical" evidence="2">
    <location>
        <begin position="279"/>
        <end position="295"/>
    </location>
</feature>
<feature type="binding site" description="axial binding residue" evidence="2">
    <location>
        <position position="118"/>
    </location>
    <ligand>
        <name>chlorophyll a</name>
        <dbReference type="ChEBI" id="CHEBI:58416"/>
        <label>ChlzD2</label>
    </ligand>
    <ligandPart>
        <name>Mg</name>
        <dbReference type="ChEBI" id="CHEBI:25107"/>
    </ligandPart>
</feature>
<feature type="binding site" evidence="2">
    <location>
        <position position="130"/>
    </location>
    <ligand>
        <name>pheophytin a</name>
        <dbReference type="ChEBI" id="CHEBI:136840"/>
        <label>D2</label>
    </ligand>
</feature>
<feature type="binding site" evidence="2">
    <location>
        <position position="143"/>
    </location>
    <ligand>
        <name>pheophytin a</name>
        <dbReference type="ChEBI" id="CHEBI:136840"/>
        <label>D2</label>
    </ligand>
</feature>
<feature type="binding site" description="axial binding residue" evidence="2">
    <location>
        <position position="198"/>
    </location>
    <ligand>
        <name>chlorophyll a</name>
        <dbReference type="ChEBI" id="CHEBI:58416"/>
        <label>PD2</label>
    </ligand>
    <ligandPart>
        <name>Mg</name>
        <dbReference type="ChEBI" id="CHEBI:25107"/>
    </ligandPart>
</feature>
<feature type="binding site" evidence="2">
    <location>
        <position position="215"/>
    </location>
    <ligand>
        <name>a plastoquinone</name>
        <dbReference type="ChEBI" id="CHEBI:17757"/>
        <label>Q(A)</label>
    </ligand>
</feature>
<feature type="binding site" evidence="2">
    <location>
        <position position="215"/>
    </location>
    <ligand>
        <name>Fe cation</name>
        <dbReference type="ChEBI" id="CHEBI:24875"/>
        <note>ligand shared with heterodimeric partner</note>
    </ligand>
</feature>
<feature type="binding site" evidence="2">
    <location>
        <position position="262"/>
    </location>
    <ligand>
        <name>a plastoquinone</name>
        <dbReference type="ChEBI" id="CHEBI:17757"/>
        <label>Q(A)</label>
    </ligand>
</feature>
<feature type="binding site" evidence="2">
    <location>
        <position position="269"/>
    </location>
    <ligand>
        <name>Fe cation</name>
        <dbReference type="ChEBI" id="CHEBI:24875"/>
        <note>ligand shared with heterodimeric partner</note>
    </ligand>
</feature>
<feature type="modified residue" description="N-acetylthreonine" evidence="1">
    <location>
        <position position="2"/>
    </location>
</feature>
<feature type="modified residue" description="Phosphothreonine" evidence="1">
    <location>
        <position position="2"/>
    </location>
</feature>
<proteinExistence type="inferred from homology"/>
<protein>
    <recommendedName>
        <fullName evidence="2">Photosystem II D2 protein</fullName>
        <shortName evidence="2">PSII D2 protein</shortName>
        <ecNumber evidence="2">1.10.3.9</ecNumber>
    </recommendedName>
    <alternativeName>
        <fullName evidence="2">Photosystem Q(A) protein</fullName>
    </alternativeName>
</protein>
<organism>
    <name type="scientific">Phalaenopsis aphrodite subsp. formosana</name>
    <name type="common">Moth orchid</name>
    <dbReference type="NCBI Taxonomy" id="308872"/>
    <lineage>
        <taxon>Eukaryota</taxon>
        <taxon>Viridiplantae</taxon>
        <taxon>Streptophyta</taxon>
        <taxon>Embryophyta</taxon>
        <taxon>Tracheophyta</taxon>
        <taxon>Spermatophyta</taxon>
        <taxon>Magnoliopsida</taxon>
        <taxon>Liliopsida</taxon>
        <taxon>Asparagales</taxon>
        <taxon>Orchidaceae</taxon>
        <taxon>Epidendroideae</taxon>
        <taxon>Vandeae</taxon>
        <taxon>Aeridinae</taxon>
        <taxon>Phalaenopsis</taxon>
    </lineage>
</organism>
<keyword id="KW-0007">Acetylation</keyword>
<keyword id="KW-0148">Chlorophyll</keyword>
<keyword id="KW-0150">Chloroplast</keyword>
<keyword id="KW-0157">Chromophore</keyword>
<keyword id="KW-0249">Electron transport</keyword>
<keyword id="KW-0408">Iron</keyword>
<keyword id="KW-0460">Magnesium</keyword>
<keyword id="KW-0472">Membrane</keyword>
<keyword id="KW-0479">Metal-binding</keyword>
<keyword id="KW-0560">Oxidoreductase</keyword>
<keyword id="KW-0597">Phosphoprotein</keyword>
<keyword id="KW-0602">Photosynthesis</keyword>
<keyword id="KW-0604">Photosystem II</keyword>
<keyword id="KW-0934">Plastid</keyword>
<keyword id="KW-0793">Thylakoid</keyword>
<keyword id="KW-0812">Transmembrane</keyword>
<keyword id="KW-1133">Transmembrane helix</keyword>
<keyword id="KW-0813">Transport</keyword>
<sequence length="353" mass="39652">MTIAFGRFIKEENDLFDIMDDWLRRDRFVFVGWSGLLLFPCAYFALGGWFTGTTFVTSWYTHGLASSYLEGCNFLTAAVSTPANSLAHSLLLLWGPEAQGDFTRWCQLGGLWTFVALHGAFGLIGFMLRQFELARSVQLRPYNAIAFSAPIAVFVSVFLIYPLGQSGWFFAPSFGVAAIFRFILFFQGFHNWTLNPFHMMGVAGVLGAALLCAIHGATVENTLFEDGDGANTFRAFNPTQAEETYSMVTANRFWSQIFGVAFSNKRWLHFFMLFVPVTGLWMSAIGVVGLALNLRAYDFVSQEIRAAEDPEFETFYTKNILLNEGIRAWMAAQDQPHENLIFPEEVLPRGNAL</sequence>
<gene>
    <name evidence="2" type="primary">psbD</name>
</gene>